<evidence type="ECO:0000250" key="1"/>
<evidence type="ECO:0000250" key="2">
    <source>
        <dbReference type="UniProtKB" id="P00157"/>
    </source>
</evidence>
<evidence type="ECO:0000255" key="3">
    <source>
        <dbReference type="PROSITE-ProRule" id="PRU00967"/>
    </source>
</evidence>
<evidence type="ECO:0000255" key="4">
    <source>
        <dbReference type="PROSITE-ProRule" id="PRU00968"/>
    </source>
</evidence>
<protein>
    <recommendedName>
        <fullName>Cytochrome b</fullName>
    </recommendedName>
    <alternativeName>
        <fullName>Complex III subunit 3</fullName>
    </alternativeName>
    <alternativeName>
        <fullName>Complex III subunit III</fullName>
    </alternativeName>
    <alternativeName>
        <fullName>Cytochrome b-c1 complex subunit 3</fullName>
    </alternativeName>
    <alternativeName>
        <fullName>Ubiquinol-cytochrome-c reductase complex cytochrome b subunit</fullName>
    </alternativeName>
</protein>
<reference key="1">
    <citation type="journal article" date="1992" name="Proc. R. Soc. B">
        <title>Phylogenetic relationships of the thylacine (Mammalia: Thylacinidae) among dasyuroid marsupials: evidence from cytochrome b DNA sequences.</title>
        <authorList>
            <person name="Krajewski C."/>
            <person name="Driskell A.C."/>
            <person name="Baverstock P.R."/>
            <person name="Braun M.J."/>
        </authorList>
    </citation>
    <scope>NUCLEOTIDE SEQUENCE [GENOMIC DNA]</scope>
</reference>
<reference key="2">
    <citation type="submission" date="1997-01" db="EMBL/GenBank/DDBJ databases">
        <authorList>
            <person name="Krajewski C."/>
        </authorList>
    </citation>
    <scope>SEQUENCE REVISION</scope>
</reference>
<accession>P92717</accession>
<name>CYB_PERNA</name>
<gene>
    <name type="primary">MT-CYB</name>
    <name type="synonym">COB</name>
    <name type="synonym">CYTB</name>
    <name type="synonym">MTCYB</name>
</gene>
<sequence length="381" mass="42668">MTNLRKTHPLMKIINDAFIDLPAPSNISAWWNFGSLLGVCLVIQILTGLFLAMHYTSDTLTAFSSVAHICRDVNYGWLIRNLHANGASMFFMCLFLHVGRGIYYGSYLFKETWNIGVILLLTVMATAFVGYVLPWGQMSFWGATVITNLLSAIPYIGTTLVEWIWGGFSVDKATLTRFFAFHFILPFIVTAMVIVHLLFLHETGSNNPSGLNPDADKIPFHPYYTIKDALGLLLMILMLLLLAMFSPDPLGDPDNFSPANPLNTPPHIKPEWYSLFAYAILRSIPNKLGGVLALLASILVLLVIPLLHTANQRSMMFRPISQTLFWLLVADLIMLTWIGGQPVEQPFIIIGQVASILYFLIIIALMPLAGLLENYMLKWES</sequence>
<keyword id="KW-0249">Electron transport</keyword>
<keyword id="KW-0349">Heme</keyword>
<keyword id="KW-0408">Iron</keyword>
<keyword id="KW-0472">Membrane</keyword>
<keyword id="KW-0479">Metal-binding</keyword>
<keyword id="KW-0496">Mitochondrion</keyword>
<keyword id="KW-0999">Mitochondrion inner membrane</keyword>
<keyword id="KW-0679">Respiratory chain</keyword>
<keyword id="KW-0812">Transmembrane</keyword>
<keyword id="KW-1133">Transmembrane helix</keyword>
<keyword id="KW-0813">Transport</keyword>
<keyword id="KW-0830">Ubiquinone</keyword>
<organism>
    <name type="scientific">Perameles nasuta</name>
    <name type="common">Long-nosed bandicoot</name>
    <dbReference type="NCBI Taxonomy" id="9344"/>
    <lineage>
        <taxon>Eukaryota</taxon>
        <taxon>Metazoa</taxon>
        <taxon>Chordata</taxon>
        <taxon>Craniata</taxon>
        <taxon>Vertebrata</taxon>
        <taxon>Euteleostomi</taxon>
        <taxon>Mammalia</taxon>
        <taxon>Metatheria</taxon>
        <taxon>Peramelemorphia</taxon>
        <taxon>Peramelidae</taxon>
        <taxon>Perameles</taxon>
    </lineage>
</organism>
<feature type="chain" id="PRO_0000061372" description="Cytochrome b">
    <location>
        <begin position="1"/>
        <end position="381"/>
    </location>
</feature>
<feature type="transmembrane region" description="Helical" evidence="2">
    <location>
        <begin position="33"/>
        <end position="53"/>
    </location>
</feature>
<feature type="transmembrane region" description="Helical" evidence="2">
    <location>
        <begin position="77"/>
        <end position="98"/>
    </location>
</feature>
<feature type="transmembrane region" description="Helical" evidence="2">
    <location>
        <begin position="113"/>
        <end position="133"/>
    </location>
</feature>
<feature type="transmembrane region" description="Helical" evidence="2">
    <location>
        <begin position="178"/>
        <end position="198"/>
    </location>
</feature>
<feature type="transmembrane region" description="Helical" evidence="2">
    <location>
        <begin position="226"/>
        <end position="246"/>
    </location>
</feature>
<feature type="transmembrane region" description="Helical" evidence="2">
    <location>
        <begin position="288"/>
        <end position="308"/>
    </location>
</feature>
<feature type="transmembrane region" description="Helical" evidence="2">
    <location>
        <begin position="320"/>
        <end position="340"/>
    </location>
</feature>
<feature type="transmembrane region" description="Helical" evidence="2">
    <location>
        <begin position="347"/>
        <end position="367"/>
    </location>
</feature>
<feature type="binding site" description="axial binding residue" evidence="2">
    <location>
        <position position="83"/>
    </location>
    <ligand>
        <name>heme b</name>
        <dbReference type="ChEBI" id="CHEBI:60344"/>
        <label>b562</label>
    </ligand>
    <ligandPart>
        <name>Fe</name>
        <dbReference type="ChEBI" id="CHEBI:18248"/>
    </ligandPart>
</feature>
<feature type="binding site" description="axial binding residue" evidence="2">
    <location>
        <position position="97"/>
    </location>
    <ligand>
        <name>heme b</name>
        <dbReference type="ChEBI" id="CHEBI:60344"/>
        <label>b566</label>
    </ligand>
    <ligandPart>
        <name>Fe</name>
        <dbReference type="ChEBI" id="CHEBI:18248"/>
    </ligandPart>
</feature>
<feature type="binding site" description="axial binding residue" evidence="2">
    <location>
        <position position="182"/>
    </location>
    <ligand>
        <name>heme b</name>
        <dbReference type="ChEBI" id="CHEBI:60344"/>
        <label>b562</label>
    </ligand>
    <ligandPart>
        <name>Fe</name>
        <dbReference type="ChEBI" id="CHEBI:18248"/>
    </ligandPart>
</feature>
<feature type="binding site" description="axial binding residue" evidence="2">
    <location>
        <position position="196"/>
    </location>
    <ligand>
        <name>heme b</name>
        <dbReference type="ChEBI" id="CHEBI:60344"/>
        <label>b566</label>
    </ligand>
    <ligandPart>
        <name>Fe</name>
        <dbReference type="ChEBI" id="CHEBI:18248"/>
    </ligandPart>
</feature>
<feature type="binding site" evidence="2">
    <location>
        <position position="201"/>
    </location>
    <ligand>
        <name>a ubiquinone</name>
        <dbReference type="ChEBI" id="CHEBI:16389"/>
    </ligand>
</feature>
<dbReference type="EMBL" id="M99466">
    <property type="protein sequence ID" value="AAB40879.1"/>
    <property type="molecule type" value="Genomic_DNA"/>
</dbReference>
<dbReference type="SMR" id="P92717"/>
<dbReference type="GO" id="GO:0005743">
    <property type="term" value="C:mitochondrial inner membrane"/>
    <property type="evidence" value="ECO:0007669"/>
    <property type="project" value="UniProtKB-SubCell"/>
</dbReference>
<dbReference type="GO" id="GO:0045275">
    <property type="term" value="C:respiratory chain complex III"/>
    <property type="evidence" value="ECO:0007669"/>
    <property type="project" value="InterPro"/>
</dbReference>
<dbReference type="GO" id="GO:0046872">
    <property type="term" value="F:metal ion binding"/>
    <property type="evidence" value="ECO:0007669"/>
    <property type="project" value="UniProtKB-KW"/>
</dbReference>
<dbReference type="GO" id="GO:0008121">
    <property type="term" value="F:ubiquinol-cytochrome-c reductase activity"/>
    <property type="evidence" value="ECO:0007669"/>
    <property type="project" value="InterPro"/>
</dbReference>
<dbReference type="GO" id="GO:0006122">
    <property type="term" value="P:mitochondrial electron transport, ubiquinol to cytochrome c"/>
    <property type="evidence" value="ECO:0007669"/>
    <property type="project" value="TreeGrafter"/>
</dbReference>
<dbReference type="CDD" id="cd00290">
    <property type="entry name" value="cytochrome_b_C"/>
    <property type="match status" value="1"/>
</dbReference>
<dbReference type="CDD" id="cd00284">
    <property type="entry name" value="Cytochrome_b_N"/>
    <property type="match status" value="1"/>
</dbReference>
<dbReference type="FunFam" id="1.20.810.10:FF:000002">
    <property type="entry name" value="Cytochrome b"/>
    <property type="match status" value="1"/>
</dbReference>
<dbReference type="Gene3D" id="1.20.810.10">
    <property type="entry name" value="Cytochrome Bc1 Complex, Chain C"/>
    <property type="match status" value="1"/>
</dbReference>
<dbReference type="InterPro" id="IPR005798">
    <property type="entry name" value="Cyt_b/b6_C"/>
</dbReference>
<dbReference type="InterPro" id="IPR036150">
    <property type="entry name" value="Cyt_b/b6_C_sf"/>
</dbReference>
<dbReference type="InterPro" id="IPR005797">
    <property type="entry name" value="Cyt_b/b6_N"/>
</dbReference>
<dbReference type="InterPro" id="IPR027387">
    <property type="entry name" value="Cytb/b6-like_sf"/>
</dbReference>
<dbReference type="InterPro" id="IPR030689">
    <property type="entry name" value="Cytochrome_b"/>
</dbReference>
<dbReference type="InterPro" id="IPR048260">
    <property type="entry name" value="Cytochrome_b_C_euk/bac"/>
</dbReference>
<dbReference type="InterPro" id="IPR048259">
    <property type="entry name" value="Cytochrome_b_N_euk/bac"/>
</dbReference>
<dbReference type="InterPro" id="IPR016174">
    <property type="entry name" value="Di-haem_cyt_TM"/>
</dbReference>
<dbReference type="PANTHER" id="PTHR19271">
    <property type="entry name" value="CYTOCHROME B"/>
    <property type="match status" value="1"/>
</dbReference>
<dbReference type="PANTHER" id="PTHR19271:SF16">
    <property type="entry name" value="CYTOCHROME B"/>
    <property type="match status" value="1"/>
</dbReference>
<dbReference type="Pfam" id="PF00032">
    <property type="entry name" value="Cytochrom_B_C"/>
    <property type="match status" value="1"/>
</dbReference>
<dbReference type="Pfam" id="PF00033">
    <property type="entry name" value="Cytochrome_B"/>
    <property type="match status" value="1"/>
</dbReference>
<dbReference type="PIRSF" id="PIRSF038885">
    <property type="entry name" value="COB"/>
    <property type="match status" value="1"/>
</dbReference>
<dbReference type="SUPFAM" id="SSF81648">
    <property type="entry name" value="a domain/subunit of cytochrome bc1 complex (Ubiquinol-cytochrome c reductase)"/>
    <property type="match status" value="1"/>
</dbReference>
<dbReference type="SUPFAM" id="SSF81342">
    <property type="entry name" value="Transmembrane di-heme cytochromes"/>
    <property type="match status" value="1"/>
</dbReference>
<dbReference type="PROSITE" id="PS51003">
    <property type="entry name" value="CYTB_CTER"/>
    <property type="match status" value="1"/>
</dbReference>
<dbReference type="PROSITE" id="PS51002">
    <property type="entry name" value="CYTB_NTER"/>
    <property type="match status" value="1"/>
</dbReference>
<proteinExistence type="inferred from homology"/>
<comment type="function">
    <text evidence="2">Component of the ubiquinol-cytochrome c reductase complex (complex III or cytochrome b-c1 complex) that is part of the mitochondrial respiratory chain. The b-c1 complex mediates electron transfer from ubiquinol to cytochrome c. Contributes to the generation of a proton gradient across the mitochondrial membrane that is then used for ATP synthesis.</text>
</comment>
<comment type="cofactor">
    <cofactor evidence="2">
        <name>heme b</name>
        <dbReference type="ChEBI" id="CHEBI:60344"/>
    </cofactor>
    <text evidence="2">Binds 2 heme b groups non-covalently.</text>
</comment>
<comment type="subunit">
    <text evidence="2">The cytochrome bc1 complex contains 11 subunits: 3 respiratory subunits (MT-CYB, CYC1 and UQCRFS1), 2 core proteins (UQCRC1 and UQCRC2) and 6 low-molecular weight proteins (UQCRH/QCR6, UQCRB/QCR7, UQCRQ/QCR8, UQCR10/QCR9, UQCR11/QCR10 and a cleavage product of UQCRFS1). This cytochrome bc1 complex then forms a dimer.</text>
</comment>
<comment type="subcellular location">
    <subcellularLocation>
        <location evidence="2">Mitochondrion inner membrane</location>
        <topology evidence="2">Multi-pass membrane protein</topology>
    </subcellularLocation>
</comment>
<comment type="miscellaneous">
    <text evidence="1">Heme 1 (or BL or b562) is low-potential and absorbs at about 562 nm, and heme 2 (or BH or b566) is high-potential and absorbs at about 566 nm.</text>
</comment>
<comment type="similarity">
    <text evidence="3 4">Belongs to the cytochrome b family.</text>
</comment>
<comment type="caution">
    <text evidence="2">The full-length protein contains only eight transmembrane helices, not nine as predicted by bioinformatics tools.</text>
</comment>
<geneLocation type="mitochondrion"/>